<gene>
    <name type="primary">norB</name>
    <name type="ordered locus">SA1269</name>
</gene>
<proteinExistence type="inferred from homology"/>
<protein>
    <recommendedName>
        <fullName>Quinolone resistance protein NorB</fullName>
    </recommendedName>
</protein>
<dbReference type="EMBL" id="BA000018">
    <property type="protein sequence ID" value="BAB42529.1"/>
    <property type="molecule type" value="Genomic_DNA"/>
</dbReference>
<dbReference type="PIR" id="D89921">
    <property type="entry name" value="D89921"/>
</dbReference>
<dbReference type="RefSeq" id="WP_000414695.1">
    <property type="nucleotide sequence ID" value="NC_002745.2"/>
</dbReference>
<dbReference type="SMR" id="Q7A5M0"/>
<dbReference type="TCDB" id="2.A.1.3.23">
    <property type="family name" value="the major facilitator superfamily (mfs)"/>
</dbReference>
<dbReference type="EnsemblBacteria" id="BAB42529">
    <property type="protein sequence ID" value="BAB42529"/>
    <property type="gene ID" value="BAB42529"/>
</dbReference>
<dbReference type="KEGG" id="sau:SA1269"/>
<dbReference type="HOGENOM" id="CLU_000960_28_3_9"/>
<dbReference type="GO" id="GO:0005886">
    <property type="term" value="C:plasma membrane"/>
    <property type="evidence" value="ECO:0007669"/>
    <property type="project" value="UniProtKB-SubCell"/>
</dbReference>
<dbReference type="GO" id="GO:0022857">
    <property type="term" value="F:transmembrane transporter activity"/>
    <property type="evidence" value="ECO:0007669"/>
    <property type="project" value="InterPro"/>
</dbReference>
<dbReference type="GO" id="GO:0046677">
    <property type="term" value="P:response to antibiotic"/>
    <property type="evidence" value="ECO:0007669"/>
    <property type="project" value="UniProtKB-KW"/>
</dbReference>
<dbReference type="CDD" id="cd17321">
    <property type="entry name" value="MFS_MMR_MDR_like"/>
    <property type="match status" value="1"/>
</dbReference>
<dbReference type="FunFam" id="1.20.1250.20:FF:000252">
    <property type="entry name" value="Quinolone resistance protein NorB"/>
    <property type="match status" value="1"/>
</dbReference>
<dbReference type="FunFam" id="1.20.1720.10:FF:000015">
    <property type="entry name" value="Quinolone resistance protein NorB"/>
    <property type="match status" value="1"/>
</dbReference>
<dbReference type="Gene3D" id="1.20.1250.20">
    <property type="entry name" value="MFS general substrate transporter like domains"/>
    <property type="match status" value="1"/>
</dbReference>
<dbReference type="Gene3D" id="1.20.1720.10">
    <property type="entry name" value="Multidrug resistance protein D"/>
    <property type="match status" value="1"/>
</dbReference>
<dbReference type="InterPro" id="IPR011701">
    <property type="entry name" value="MFS"/>
</dbReference>
<dbReference type="InterPro" id="IPR020846">
    <property type="entry name" value="MFS_dom"/>
</dbReference>
<dbReference type="InterPro" id="IPR036259">
    <property type="entry name" value="MFS_trans_sf"/>
</dbReference>
<dbReference type="PANTHER" id="PTHR42718">
    <property type="entry name" value="MAJOR FACILITATOR SUPERFAMILY MULTIDRUG TRANSPORTER MFSC"/>
    <property type="match status" value="1"/>
</dbReference>
<dbReference type="PANTHER" id="PTHR42718:SF9">
    <property type="entry name" value="MAJOR FACILITATOR SUPERFAMILY MULTIDRUG TRANSPORTER MFSC"/>
    <property type="match status" value="1"/>
</dbReference>
<dbReference type="Pfam" id="PF07690">
    <property type="entry name" value="MFS_1"/>
    <property type="match status" value="1"/>
</dbReference>
<dbReference type="SUPFAM" id="SSF103473">
    <property type="entry name" value="MFS general substrate transporter"/>
    <property type="match status" value="1"/>
</dbReference>
<dbReference type="PROSITE" id="PS50850">
    <property type="entry name" value="MFS"/>
    <property type="match status" value="1"/>
</dbReference>
<evidence type="ECO:0000250" key="1"/>
<evidence type="ECO:0000255" key="2"/>
<evidence type="ECO:0000305" key="3"/>
<accession>Q7A5M0</accession>
<feature type="chain" id="PRO_0000361963" description="Quinolone resistance protein NorB">
    <location>
        <begin position="1"/>
        <end position="463"/>
    </location>
</feature>
<feature type="transmembrane region" description="Helical" evidence="2">
    <location>
        <begin position="17"/>
        <end position="37"/>
    </location>
</feature>
<feature type="transmembrane region" description="Helical" evidence="2">
    <location>
        <begin position="53"/>
        <end position="73"/>
    </location>
</feature>
<feature type="transmembrane region" description="Helical" evidence="2">
    <location>
        <begin position="86"/>
        <end position="106"/>
    </location>
</feature>
<feature type="transmembrane region" description="Helical" evidence="2">
    <location>
        <begin position="107"/>
        <end position="127"/>
    </location>
</feature>
<feature type="transmembrane region" description="Helical" evidence="2">
    <location>
        <begin position="142"/>
        <end position="162"/>
    </location>
</feature>
<feature type="transmembrane region" description="Helical" evidence="2">
    <location>
        <begin position="165"/>
        <end position="185"/>
    </location>
</feature>
<feature type="transmembrane region" description="Helical" evidence="2">
    <location>
        <begin position="201"/>
        <end position="221"/>
    </location>
</feature>
<feature type="transmembrane region" description="Helical" evidence="2">
    <location>
        <begin position="230"/>
        <end position="250"/>
    </location>
</feature>
<feature type="transmembrane region" description="Helical" evidence="2">
    <location>
        <begin position="273"/>
        <end position="293"/>
    </location>
</feature>
<feature type="transmembrane region" description="Helical" evidence="2">
    <location>
        <begin position="299"/>
        <end position="319"/>
    </location>
</feature>
<feature type="transmembrane region" description="Helical" evidence="2">
    <location>
        <begin position="334"/>
        <end position="354"/>
    </location>
</feature>
<feature type="transmembrane region" description="Helical" evidence="2">
    <location>
        <begin position="357"/>
        <end position="377"/>
    </location>
</feature>
<feature type="transmembrane region" description="Helical" evidence="2">
    <location>
        <begin position="403"/>
        <end position="423"/>
    </location>
</feature>
<feature type="transmembrane region" description="Helical" evidence="2">
    <location>
        <begin position="435"/>
        <end position="455"/>
    </location>
</feature>
<keyword id="KW-0046">Antibiotic resistance</keyword>
<keyword id="KW-1003">Cell membrane</keyword>
<keyword id="KW-0472">Membrane</keyword>
<keyword id="KW-0812">Transmembrane</keyword>
<keyword id="KW-1133">Transmembrane helix</keyword>
<keyword id="KW-0813">Transport</keyword>
<name>NORB_STAAN</name>
<comment type="function">
    <text evidence="1">Multidrug efflux pump that acts independently of NorA and is one of the factors that confers resistance against diverse quinolones and chemical compounds.</text>
</comment>
<comment type="subcellular location">
    <subcellularLocation>
        <location evidence="3">Cell membrane</location>
        <topology evidence="3">Multi-pass membrane protein</topology>
    </subcellularLocation>
</comment>
<comment type="similarity">
    <text evidence="3">Belongs to the major facilitator superfamily. TCR/Tet family.</text>
</comment>
<organism>
    <name type="scientific">Staphylococcus aureus (strain N315)</name>
    <dbReference type="NCBI Taxonomy" id="158879"/>
    <lineage>
        <taxon>Bacteria</taxon>
        <taxon>Bacillati</taxon>
        <taxon>Bacillota</taxon>
        <taxon>Bacilli</taxon>
        <taxon>Bacillales</taxon>
        <taxon>Staphylococcaceae</taxon>
        <taxon>Staphylococcus</taxon>
    </lineage>
</organism>
<sequence>MEKPSREAFEGNNKLLIGIVLSVITFWLFAQSLVNVVPILEDSFNTDIGTVNIAVSITALFSGMFVVGAGGLADKYGRIKLTNIGIILNILGSLLIIISNIPLLLIIGRLIQGLSAACIMPATLSIIKSYYIGKDRQRALSYWSIGSWGGSGVCSFFGGAVATLLGWRWIFILSIIISLIALFLIKGTPETKSKSISLNKFDIKGLVLLVIMLLTLNILITKGSELGVTSLLFITLLAIAIGSFSLFIVLEKRATNPLIDFKLFKNKAYTGATASNFLLNGVAGTLIVANTFVQRGLGYSSLQAGSLSITYLVMVLIMIRVGEKLLQTLGCKKPMLIGTGVLIVGECLISLTFLPEILYVICCIIGYLFFGLGLGIYATPSTDTAIANAPLEKVGVAAGIYKMASALGGAFGVALSGAVYAIVSNMTNIYTGAMIALWLNAGMGILSFVIILLLVPKQNDTQL</sequence>
<reference key="1">
    <citation type="journal article" date="2001" name="Lancet">
        <title>Whole genome sequencing of meticillin-resistant Staphylococcus aureus.</title>
        <authorList>
            <person name="Kuroda M."/>
            <person name="Ohta T."/>
            <person name="Uchiyama I."/>
            <person name="Baba T."/>
            <person name="Yuzawa H."/>
            <person name="Kobayashi I."/>
            <person name="Cui L."/>
            <person name="Oguchi A."/>
            <person name="Aoki K."/>
            <person name="Nagai Y."/>
            <person name="Lian J.-Q."/>
            <person name="Ito T."/>
            <person name="Kanamori M."/>
            <person name="Matsumaru H."/>
            <person name="Maruyama A."/>
            <person name="Murakami H."/>
            <person name="Hosoyama A."/>
            <person name="Mizutani-Ui Y."/>
            <person name="Takahashi N.K."/>
            <person name="Sawano T."/>
            <person name="Inoue R."/>
            <person name="Kaito C."/>
            <person name="Sekimizu K."/>
            <person name="Hirakawa H."/>
            <person name="Kuhara S."/>
            <person name="Goto S."/>
            <person name="Yabuzaki J."/>
            <person name="Kanehisa M."/>
            <person name="Yamashita A."/>
            <person name="Oshima K."/>
            <person name="Furuya K."/>
            <person name="Yoshino C."/>
            <person name="Shiba T."/>
            <person name="Hattori M."/>
            <person name="Ogasawara N."/>
            <person name="Hayashi H."/>
            <person name="Hiramatsu K."/>
        </authorList>
    </citation>
    <scope>NUCLEOTIDE SEQUENCE [LARGE SCALE GENOMIC DNA]</scope>
    <source>
        <strain>N315</strain>
    </source>
</reference>